<feature type="signal peptide" evidence="2">
    <location>
        <begin position="1"/>
        <end position="25"/>
    </location>
</feature>
<feature type="chain" id="PRO_0000414109" description="Veficolin-1">
    <location>
        <begin position="26"/>
        <end position="221" status="greater than"/>
    </location>
</feature>
<feature type="domain" description="Collagen-like">
    <location>
        <begin position="50"/>
        <end position="104"/>
    </location>
</feature>
<feature type="domain" description="Fibrinogen C-terminal" evidence="3">
    <location>
        <begin position="111"/>
        <end position="221" status="greater than"/>
    </location>
</feature>
<feature type="region of interest" description="Disordered" evidence="4">
    <location>
        <begin position="54"/>
        <end position="104"/>
    </location>
</feature>
<feature type="disulfide bond" evidence="3">
    <location>
        <begin position="120"/>
        <end position="148"/>
    </location>
</feature>
<feature type="non-terminal residue">
    <location>
        <position position="221"/>
    </location>
</feature>
<comment type="function">
    <text evidence="1">Initiates complement activation and/or interferes in platelet aggregation and/or blood coagulation.</text>
</comment>
<comment type="subcellular location">
    <subcellularLocation>
        <location evidence="1">Secreted</location>
    </subcellularLocation>
</comment>
<comment type="tissue specificity">
    <text>Expressed by the mandibular venom duct.</text>
</comment>
<comment type="similarity">
    <text evidence="5">Belongs to the ficolin lectin family. Veficolin subfamily.</text>
</comment>
<name>FCNV1_VARKO</name>
<reference key="1">
    <citation type="journal article" date="2010" name="Mol. Cell. Proteomics">
        <title>Functional and structural diversification of the Anguimorpha lizard venom system.</title>
        <authorList>
            <person name="Fry B.G."/>
            <person name="Winter K."/>
            <person name="Norman J.A."/>
            <person name="Roelants K."/>
            <person name="Nabuurs R.J."/>
            <person name="van Osch M.J."/>
            <person name="Teeuwisse W.M."/>
            <person name="van der Weerd L."/>
            <person name="McNaughtan J.E."/>
            <person name="Kwok H.F."/>
            <person name="Scheib H."/>
            <person name="Greisman L."/>
            <person name="Kochva E."/>
            <person name="Miller L.J."/>
            <person name="Gao F."/>
            <person name="Karas J."/>
            <person name="Scanlon D."/>
            <person name="Lin F."/>
            <person name="Kuruppu S."/>
            <person name="Shaw C."/>
            <person name="Wong L."/>
            <person name="Hodgson W.C."/>
        </authorList>
    </citation>
    <scope>NUCLEOTIDE SEQUENCE [MRNA]</scope>
    <source>
        <tissue>Venom gland</tissue>
    </source>
</reference>
<proteinExistence type="evidence at transcript level"/>
<accession>E2IYB3</accession>
<protein>
    <recommendedName>
        <fullName>Veficolin-1</fullName>
    </recommendedName>
</protein>
<dbReference type="EMBL" id="HM641898">
    <property type="protein sequence ID" value="ADK46899.1"/>
    <property type="molecule type" value="mRNA"/>
</dbReference>
<dbReference type="SMR" id="E2IYB3"/>
<dbReference type="Proteomes" id="UP000694545">
    <property type="component" value="Unplaced"/>
</dbReference>
<dbReference type="GO" id="GO:0005615">
    <property type="term" value="C:extracellular space"/>
    <property type="evidence" value="ECO:0007669"/>
    <property type="project" value="TreeGrafter"/>
</dbReference>
<dbReference type="GO" id="GO:0003823">
    <property type="term" value="F:antigen binding"/>
    <property type="evidence" value="ECO:0007669"/>
    <property type="project" value="TreeGrafter"/>
</dbReference>
<dbReference type="GO" id="GO:0097367">
    <property type="term" value="F:carbohydrate derivative binding"/>
    <property type="evidence" value="ECO:0007669"/>
    <property type="project" value="TreeGrafter"/>
</dbReference>
<dbReference type="GO" id="GO:0005102">
    <property type="term" value="F:signaling receptor binding"/>
    <property type="evidence" value="ECO:0007669"/>
    <property type="project" value="TreeGrafter"/>
</dbReference>
<dbReference type="GO" id="GO:0090729">
    <property type="term" value="F:toxin activity"/>
    <property type="evidence" value="ECO:0007669"/>
    <property type="project" value="UniProtKB-KW"/>
</dbReference>
<dbReference type="GO" id="GO:0001867">
    <property type="term" value="P:complement activation, lectin pathway"/>
    <property type="evidence" value="ECO:0007669"/>
    <property type="project" value="TreeGrafter"/>
</dbReference>
<dbReference type="Gene3D" id="3.90.215.10">
    <property type="entry name" value="Gamma Fibrinogen, chain A, domain 1"/>
    <property type="match status" value="1"/>
</dbReference>
<dbReference type="InterPro" id="IPR008160">
    <property type="entry name" value="Collagen"/>
</dbReference>
<dbReference type="InterPro" id="IPR036056">
    <property type="entry name" value="Fibrinogen-like_C"/>
</dbReference>
<dbReference type="InterPro" id="IPR014716">
    <property type="entry name" value="Fibrinogen_a/b/g_C_1"/>
</dbReference>
<dbReference type="InterPro" id="IPR002181">
    <property type="entry name" value="Fibrinogen_a/b/g_C_dom"/>
</dbReference>
<dbReference type="InterPro" id="IPR050373">
    <property type="entry name" value="Fibrinogen_C-term_domain"/>
</dbReference>
<dbReference type="NCBIfam" id="NF040941">
    <property type="entry name" value="GGGWT_bact"/>
    <property type="match status" value="1"/>
</dbReference>
<dbReference type="PANTHER" id="PTHR19143">
    <property type="entry name" value="FIBRINOGEN/TENASCIN/ANGIOPOEITIN"/>
    <property type="match status" value="1"/>
</dbReference>
<dbReference type="PANTHER" id="PTHR19143:SF415">
    <property type="entry name" value="FICOLIN-3"/>
    <property type="match status" value="1"/>
</dbReference>
<dbReference type="Pfam" id="PF01391">
    <property type="entry name" value="Collagen"/>
    <property type="match status" value="1"/>
</dbReference>
<dbReference type="Pfam" id="PF00147">
    <property type="entry name" value="Fibrinogen_C"/>
    <property type="match status" value="1"/>
</dbReference>
<dbReference type="SMART" id="SM00186">
    <property type="entry name" value="FBG"/>
    <property type="match status" value="1"/>
</dbReference>
<dbReference type="SUPFAM" id="SSF56496">
    <property type="entry name" value="Fibrinogen C-terminal domain-like"/>
    <property type="match status" value="1"/>
</dbReference>
<dbReference type="PROSITE" id="PS51406">
    <property type="entry name" value="FIBRINOGEN_C_2"/>
    <property type="match status" value="1"/>
</dbReference>
<sequence>MTAWLDFPLALSPLVVVSMKGGSFGQGSEANGSPQLTGLSECGADRIFLQGQAGIPGIPGVPGTNGLPGAKGDLGPQGPPGERGSTGIPGKAGPKGDKGDQGEACSLASCQQQEAGAKDCKELLDRGETLTGWYMIYPTTGRGMRAYCDMETDGGGWLVFQRRLDGSVDFYRDWEAYKKGFGRQVSEFWLGNDKIHLLTSSGIQQLRIDVEDFNNSKTFAK</sequence>
<evidence type="ECO:0000250" key="1"/>
<evidence type="ECO:0000255" key="2"/>
<evidence type="ECO:0000255" key="3">
    <source>
        <dbReference type="PROSITE-ProRule" id="PRU00739"/>
    </source>
</evidence>
<evidence type="ECO:0000256" key="4">
    <source>
        <dbReference type="SAM" id="MobiDB-lite"/>
    </source>
</evidence>
<evidence type="ECO:0000305" key="5"/>
<organism>
    <name type="scientific">Varanus komodoensis</name>
    <name type="common">Komodo dragon</name>
    <dbReference type="NCBI Taxonomy" id="61221"/>
    <lineage>
        <taxon>Eukaryota</taxon>
        <taxon>Metazoa</taxon>
        <taxon>Chordata</taxon>
        <taxon>Craniata</taxon>
        <taxon>Vertebrata</taxon>
        <taxon>Euteleostomi</taxon>
        <taxon>Lepidosauria</taxon>
        <taxon>Squamata</taxon>
        <taxon>Bifurcata</taxon>
        <taxon>Unidentata</taxon>
        <taxon>Episquamata</taxon>
        <taxon>Toxicofera</taxon>
        <taxon>Anguimorpha</taxon>
        <taxon>Paleoanguimorpha</taxon>
        <taxon>Varanoidea</taxon>
        <taxon>Varanidae</taxon>
        <taxon>Varanus</taxon>
    </lineage>
</organism>
<keyword id="KW-1216">Complement system impairing toxin</keyword>
<keyword id="KW-1015">Disulfide bond</keyword>
<keyword id="KW-1199">Hemostasis impairing toxin</keyword>
<keyword id="KW-1185">Reference proteome</keyword>
<keyword id="KW-0964">Secreted</keyword>
<keyword id="KW-0732">Signal</keyword>
<keyword id="KW-0800">Toxin</keyword>